<protein>
    <recommendedName>
        <fullName>Vang-like protein 2</fullName>
    </recommendedName>
    <alternativeName>
        <fullName>Protein strabismus</fullName>
    </alternativeName>
    <alternativeName>
        <fullName>Protein trilobite</fullName>
    </alternativeName>
    <alternativeName>
        <fullName>Van Gogh-like protein 2</fullName>
    </alternativeName>
</protein>
<organism>
    <name type="scientific">Danio rerio</name>
    <name type="common">Zebrafish</name>
    <name type="synonym">Brachydanio rerio</name>
    <dbReference type="NCBI Taxonomy" id="7955"/>
    <lineage>
        <taxon>Eukaryota</taxon>
        <taxon>Metazoa</taxon>
        <taxon>Chordata</taxon>
        <taxon>Craniata</taxon>
        <taxon>Vertebrata</taxon>
        <taxon>Euteleostomi</taxon>
        <taxon>Actinopterygii</taxon>
        <taxon>Neopterygii</taxon>
        <taxon>Teleostei</taxon>
        <taxon>Ostariophysi</taxon>
        <taxon>Cypriniformes</taxon>
        <taxon>Danionidae</taxon>
        <taxon>Danioninae</taxon>
        <taxon>Danio</taxon>
    </lineage>
</organism>
<keyword id="KW-1003">Cell membrane</keyword>
<keyword id="KW-0217">Developmental protein</keyword>
<keyword id="KW-0221">Differentiation</keyword>
<keyword id="KW-0306">Gastrulation</keyword>
<keyword id="KW-0472">Membrane</keyword>
<keyword id="KW-0524">Neurogenesis</keyword>
<keyword id="KW-1185">Reference proteome</keyword>
<keyword id="KW-0812">Transmembrane</keyword>
<keyword id="KW-1133">Transmembrane helix</keyword>
<keyword id="KW-0879">Wnt signaling pathway</keyword>
<evidence type="ECO:0000250" key="1"/>
<evidence type="ECO:0000250" key="2">
    <source>
        <dbReference type="UniProtKB" id="Q91ZD4"/>
    </source>
</evidence>
<evidence type="ECO:0000255" key="3"/>
<evidence type="ECO:0000256" key="4">
    <source>
        <dbReference type="SAM" id="MobiDB-lite"/>
    </source>
</evidence>
<evidence type="ECO:0000269" key="5">
    <source>
    </source>
</evidence>
<evidence type="ECO:0000269" key="6">
    <source>
    </source>
</evidence>
<evidence type="ECO:0000269" key="7">
    <source>
    </source>
</evidence>
<evidence type="ECO:0000269" key="8">
    <source>
    </source>
</evidence>
<evidence type="ECO:0000269" key="9">
    <source>
    </source>
</evidence>
<evidence type="ECO:0000269" key="10">
    <source>
    </source>
</evidence>
<evidence type="ECO:0000269" key="11">
    <source>
    </source>
</evidence>
<evidence type="ECO:0000269" key="12">
    <source>
    </source>
</evidence>
<evidence type="ECO:0000269" key="13">
    <source>
    </source>
</evidence>
<evidence type="ECO:0000269" key="14">
    <source>
    </source>
</evidence>
<evidence type="ECO:0000269" key="15">
    <source>
    </source>
</evidence>
<evidence type="ECO:0000269" key="16">
    <source>
    </source>
</evidence>
<evidence type="ECO:0000269" key="17">
    <source>
    </source>
</evidence>
<evidence type="ECO:0000269" key="18">
    <source ref="2"/>
</evidence>
<evidence type="ECO:0000303" key="19">
    <source>
    </source>
</evidence>
<evidence type="ECO:0000303" key="20">
    <source>
    </source>
</evidence>
<evidence type="ECO:0000305" key="21"/>
<evidence type="ECO:0000312" key="22">
    <source>
        <dbReference type="EMBL" id="AAH65983.1"/>
    </source>
</evidence>
<evidence type="ECO:0000312" key="23">
    <source>
        <dbReference type="EMBL" id="AAL30891.1"/>
    </source>
</evidence>
<evidence type="ECO:0000312" key="24">
    <source>
        <dbReference type="ZFIN" id="ZDB-GENE-020507-3"/>
    </source>
</evidence>
<accession>Q8UVJ6</accession>
<accession>Q6NZS8</accession>
<dbReference type="EMBL" id="AF428249">
    <property type="protein sequence ID" value="AAL30891.1"/>
    <property type="molecule type" value="mRNA"/>
</dbReference>
<dbReference type="EMBL" id="BC065983">
    <property type="protein sequence ID" value="AAH65983.1"/>
    <property type="status" value="ALT_SEQ"/>
    <property type="molecule type" value="mRNA"/>
</dbReference>
<dbReference type="RefSeq" id="NP_705960.1">
    <property type="nucleotide sequence ID" value="NM_153674.2"/>
</dbReference>
<dbReference type="SMR" id="Q8UVJ6"/>
<dbReference type="BioGRID" id="79765">
    <property type="interactions" value="1"/>
</dbReference>
<dbReference type="FunCoup" id="Q8UVJ6">
    <property type="interactions" value="1472"/>
</dbReference>
<dbReference type="STRING" id="7955.ENSDARP00000031546"/>
<dbReference type="PaxDb" id="7955-ENSDARP00000031546"/>
<dbReference type="Ensembl" id="ENSDART00000033316">
    <property type="protein sequence ID" value="ENSDARP00000031546"/>
    <property type="gene ID" value="ENSDARG00000027397"/>
</dbReference>
<dbReference type="GeneID" id="245949"/>
<dbReference type="KEGG" id="dre:245949"/>
<dbReference type="AGR" id="ZFIN:ZDB-GENE-020507-3"/>
<dbReference type="CTD" id="57216"/>
<dbReference type="ZFIN" id="ZDB-GENE-020507-3">
    <property type="gene designation" value="vangl2"/>
</dbReference>
<dbReference type="eggNOG" id="KOG3814">
    <property type="taxonomic scope" value="Eukaryota"/>
</dbReference>
<dbReference type="InParanoid" id="Q8UVJ6"/>
<dbReference type="OMA" id="MWHREND"/>
<dbReference type="OrthoDB" id="8887313at2759"/>
<dbReference type="PhylomeDB" id="Q8UVJ6"/>
<dbReference type="TreeFam" id="TF313467"/>
<dbReference type="Reactome" id="R-DRE-9696264">
    <property type="pathway name" value="RND3 GTPase cycle"/>
</dbReference>
<dbReference type="Reactome" id="R-DRE-9696270">
    <property type="pathway name" value="RND2 GTPase cycle"/>
</dbReference>
<dbReference type="Reactome" id="R-DRE-9696273">
    <property type="pathway name" value="RND1 GTPase cycle"/>
</dbReference>
<dbReference type="PRO" id="PR:Q8UVJ6"/>
<dbReference type="Proteomes" id="UP000000437">
    <property type="component" value="Chromosome 7"/>
</dbReference>
<dbReference type="Bgee" id="ENSDARG00000027397">
    <property type="expression patterns" value="Expressed in gastrula and 33 other cell types or tissues"/>
</dbReference>
<dbReference type="GO" id="GO:0016020">
    <property type="term" value="C:membrane"/>
    <property type="evidence" value="ECO:0000303"/>
    <property type="project" value="UniProtKB"/>
</dbReference>
<dbReference type="GO" id="GO:0005886">
    <property type="term" value="C:plasma membrane"/>
    <property type="evidence" value="ECO:0000314"/>
    <property type="project" value="ZFIN"/>
</dbReference>
<dbReference type="GO" id="GO:0007015">
    <property type="term" value="P:actin filament organization"/>
    <property type="evidence" value="ECO:0000315"/>
    <property type="project" value="ZFIN"/>
</dbReference>
<dbReference type="GO" id="GO:0033564">
    <property type="term" value="P:anterior/posterior axon guidance"/>
    <property type="evidence" value="ECO:0000315"/>
    <property type="project" value="ZFIN"/>
</dbReference>
<dbReference type="GO" id="GO:0003401">
    <property type="term" value="P:axis elongation"/>
    <property type="evidence" value="ECO:0000316"/>
    <property type="project" value="ZFIN"/>
</dbReference>
<dbReference type="GO" id="GO:0021535">
    <property type="term" value="P:cell migration in hindbrain"/>
    <property type="evidence" value="ECO:0000315"/>
    <property type="project" value="ZFIN"/>
</dbReference>
<dbReference type="GO" id="GO:0042074">
    <property type="term" value="P:cell migration involved in gastrulation"/>
    <property type="evidence" value="ECO:0000315"/>
    <property type="project" value="ZFIN"/>
</dbReference>
<dbReference type="GO" id="GO:0000902">
    <property type="term" value="P:cell morphogenesis"/>
    <property type="evidence" value="ECO:0000315"/>
    <property type="project" value="ZFIN"/>
</dbReference>
<dbReference type="GO" id="GO:0060271">
    <property type="term" value="P:cilium assembly"/>
    <property type="evidence" value="ECO:0000315"/>
    <property type="project" value="ZFIN"/>
</dbReference>
<dbReference type="GO" id="GO:0044782">
    <property type="term" value="P:cilium organization"/>
    <property type="evidence" value="ECO:0000315"/>
    <property type="project" value="ZFIN"/>
</dbReference>
<dbReference type="GO" id="GO:0035844">
    <property type="term" value="P:cloaca development"/>
    <property type="evidence" value="ECO:0000315"/>
    <property type="project" value="ZFIN"/>
</dbReference>
<dbReference type="GO" id="GO:0071679">
    <property type="term" value="P:commissural neuron axon guidance"/>
    <property type="evidence" value="ECO:0000315"/>
    <property type="project" value="ZFIN"/>
</dbReference>
<dbReference type="GO" id="GO:0060026">
    <property type="term" value="P:convergent extension"/>
    <property type="evidence" value="ECO:0000314"/>
    <property type="project" value="ZFIN"/>
</dbReference>
<dbReference type="GO" id="GO:0060028">
    <property type="term" value="P:convergent extension involved in axis elongation"/>
    <property type="evidence" value="ECO:0000315"/>
    <property type="project" value="ZFIN"/>
</dbReference>
<dbReference type="GO" id="GO:0060027">
    <property type="term" value="P:convergent extension involved in gastrulation"/>
    <property type="evidence" value="ECO:0000315"/>
    <property type="project" value="UniProtKB"/>
</dbReference>
<dbReference type="GO" id="GO:0060030">
    <property type="term" value="P:dorsal convergence"/>
    <property type="evidence" value="ECO:0000315"/>
    <property type="project" value="ZFIN"/>
</dbReference>
<dbReference type="GO" id="GO:0048048">
    <property type="term" value="P:embryonic eye morphogenesis"/>
    <property type="evidence" value="ECO:0000315"/>
    <property type="project" value="ZFIN"/>
</dbReference>
<dbReference type="GO" id="GO:0060971">
    <property type="term" value="P:embryonic heart tube left/right pattern formation"/>
    <property type="evidence" value="ECO:0000315"/>
    <property type="project" value="ZFIN"/>
</dbReference>
<dbReference type="GO" id="GO:0030010">
    <property type="term" value="P:establishment of cell polarity"/>
    <property type="evidence" value="ECO:0000315"/>
    <property type="project" value="ZFIN"/>
</dbReference>
<dbReference type="GO" id="GO:0000132">
    <property type="term" value="P:establishment of mitotic spindle orientation"/>
    <property type="evidence" value="ECO:0000315"/>
    <property type="project" value="ZFIN"/>
</dbReference>
<dbReference type="GO" id="GO:0001736">
    <property type="term" value="P:establishment of planar polarity"/>
    <property type="evidence" value="ECO:0000315"/>
    <property type="project" value="ZFIN"/>
</dbReference>
<dbReference type="GO" id="GO:0007163">
    <property type="term" value="P:establishment or maintenance of cell polarity"/>
    <property type="evidence" value="ECO:0000315"/>
    <property type="project" value="UniProtKB"/>
</dbReference>
<dbReference type="GO" id="GO:0030198">
    <property type="term" value="P:extracellular matrix organization"/>
    <property type="evidence" value="ECO:0000315"/>
    <property type="project" value="ZFIN"/>
</dbReference>
<dbReference type="GO" id="GO:0001654">
    <property type="term" value="P:eye development"/>
    <property type="evidence" value="ECO:0000316"/>
    <property type="project" value="UniProtKB"/>
</dbReference>
<dbReference type="GO" id="GO:0060972">
    <property type="term" value="P:left/right pattern formation"/>
    <property type="evidence" value="ECO:0000315"/>
    <property type="project" value="ZFIN"/>
</dbReference>
<dbReference type="GO" id="GO:0097475">
    <property type="term" value="P:motor neuron migration"/>
    <property type="evidence" value="ECO:0000315"/>
    <property type="project" value="ZFIN"/>
</dbReference>
<dbReference type="GO" id="GO:0014812">
    <property type="term" value="P:muscle cell migration"/>
    <property type="evidence" value="ECO:0000315"/>
    <property type="project" value="ZFIN"/>
</dbReference>
<dbReference type="GO" id="GO:0090090">
    <property type="term" value="P:negative regulation of canonical Wnt signaling pathway"/>
    <property type="evidence" value="ECO:0000315"/>
    <property type="project" value="UniProtKB"/>
</dbReference>
<dbReference type="GO" id="GO:0001839">
    <property type="term" value="P:neural plate morphogenesis"/>
    <property type="evidence" value="ECO:0000315"/>
    <property type="project" value="ZFIN"/>
</dbReference>
<dbReference type="GO" id="GO:0021915">
    <property type="term" value="P:neural tube development"/>
    <property type="evidence" value="ECO:0000315"/>
    <property type="project" value="UniProtKB"/>
</dbReference>
<dbReference type="GO" id="GO:0001841">
    <property type="term" value="P:neural tube formation"/>
    <property type="evidence" value="ECO:0000315"/>
    <property type="project" value="ZFIN"/>
</dbReference>
<dbReference type="GO" id="GO:0048884">
    <property type="term" value="P:neuromast development"/>
    <property type="evidence" value="ECO:0000315"/>
    <property type="project" value="ZFIN"/>
</dbReference>
<dbReference type="GO" id="GO:0001764">
    <property type="term" value="P:neuron migration"/>
    <property type="evidence" value="ECO:0000315"/>
    <property type="project" value="UniProtKB"/>
</dbReference>
<dbReference type="GO" id="GO:0030903">
    <property type="term" value="P:notochord development"/>
    <property type="evidence" value="ECO:0000315"/>
    <property type="project" value="UniProtKB"/>
</dbReference>
<dbReference type="GO" id="GO:0048570">
    <property type="term" value="P:notochord morphogenesis"/>
    <property type="evidence" value="ECO:0000315"/>
    <property type="project" value="ZFIN"/>
</dbReference>
<dbReference type="GO" id="GO:0048840">
    <property type="term" value="P:otolith development"/>
    <property type="evidence" value="ECO:0000315"/>
    <property type="project" value="ZFIN"/>
</dbReference>
<dbReference type="GO" id="GO:0035845">
    <property type="term" value="P:photoreceptor cell outer segment organization"/>
    <property type="evidence" value="ECO:0000316"/>
    <property type="project" value="ZFIN"/>
</dbReference>
<dbReference type="GO" id="GO:0045813">
    <property type="term" value="P:positive regulation of Wnt signaling pathway, calcium modulating pathway"/>
    <property type="evidence" value="ECO:0000315"/>
    <property type="project" value="UniProtKB"/>
</dbReference>
<dbReference type="GO" id="GO:0036342">
    <property type="term" value="P:post-anal tail morphogenesis"/>
    <property type="evidence" value="ECO:0000315"/>
    <property type="project" value="ZFIN"/>
</dbReference>
<dbReference type="GO" id="GO:0001756">
    <property type="term" value="P:somitogenesis"/>
    <property type="evidence" value="ECO:0000316"/>
    <property type="project" value="UniProtKB"/>
</dbReference>
<dbReference type="GO" id="GO:0055002">
    <property type="term" value="P:striated muscle cell development"/>
    <property type="evidence" value="ECO:0000315"/>
    <property type="project" value="ZFIN"/>
</dbReference>
<dbReference type="GO" id="GO:0060071">
    <property type="term" value="P:Wnt signaling pathway, planar cell polarity pathway"/>
    <property type="evidence" value="ECO:0000315"/>
    <property type="project" value="UniProtKB"/>
</dbReference>
<dbReference type="InterPro" id="IPR009539">
    <property type="entry name" value="VANGL"/>
</dbReference>
<dbReference type="PANTHER" id="PTHR20886">
    <property type="entry name" value="VANG-LIKE PROTEIN"/>
    <property type="match status" value="1"/>
</dbReference>
<dbReference type="Pfam" id="PF06638">
    <property type="entry name" value="Strabismus"/>
    <property type="match status" value="1"/>
</dbReference>
<dbReference type="PIRSF" id="PIRSF007991">
    <property type="entry name" value="Strabismus"/>
    <property type="match status" value="1"/>
</dbReference>
<proteinExistence type="evidence at protein level"/>
<feature type="chain" id="PRO_0000283730" description="Vang-like protein 2">
    <location>
        <begin position="1"/>
        <end position="526"/>
    </location>
</feature>
<feature type="topological domain" description="Cytoplasmic" evidence="3">
    <location>
        <begin position="1"/>
        <end position="109"/>
    </location>
</feature>
<feature type="transmembrane region" description="Helical; Name=1" evidence="3">
    <location>
        <begin position="110"/>
        <end position="130"/>
    </location>
</feature>
<feature type="topological domain" description="Extracellular" evidence="3">
    <location>
        <begin position="131"/>
        <end position="148"/>
    </location>
</feature>
<feature type="transmembrane region" description="Helical; Name=2" evidence="3">
    <location>
        <begin position="149"/>
        <end position="169"/>
    </location>
</feature>
<feature type="topological domain" description="Cytoplasmic" evidence="3">
    <location>
        <begin position="170"/>
        <end position="178"/>
    </location>
</feature>
<feature type="transmembrane region" description="Helical; Name=3" evidence="3">
    <location>
        <begin position="179"/>
        <end position="199"/>
    </location>
</feature>
<feature type="topological domain" description="Extracellular" evidence="3">
    <location>
        <begin position="200"/>
        <end position="215"/>
    </location>
</feature>
<feature type="transmembrane region" description="Helical; Name=4" evidence="3">
    <location>
        <begin position="216"/>
        <end position="236"/>
    </location>
</feature>
<feature type="topological domain" description="Cytoplasmic" evidence="3">
    <location>
        <begin position="237"/>
        <end position="526"/>
    </location>
</feature>
<feature type="region of interest" description="Disordered" evidence="4">
    <location>
        <begin position="1"/>
        <end position="95"/>
    </location>
</feature>
<feature type="short sequence motif" description="PDZ-binding" evidence="3">
    <location>
        <begin position="523"/>
        <end position="526"/>
    </location>
</feature>
<feature type="compositionally biased region" description="Basic residues" evidence="4">
    <location>
        <begin position="15"/>
        <end position="33"/>
    </location>
</feature>
<feature type="compositionally biased region" description="Basic and acidic residues" evidence="4">
    <location>
        <begin position="34"/>
        <end position="43"/>
    </location>
</feature>
<feature type="compositionally biased region" description="Basic and acidic residues" evidence="4">
    <location>
        <begin position="58"/>
        <end position="68"/>
    </location>
</feature>
<feature type="compositionally biased region" description="Low complexity" evidence="4">
    <location>
        <begin position="70"/>
        <end position="83"/>
    </location>
</feature>
<feature type="compositionally biased region" description="Basic and acidic residues" evidence="4">
    <location>
        <begin position="84"/>
        <end position="95"/>
    </location>
</feature>
<feature type="mutagenesis site" description="No effect on dvl2/dsh-binding." evidence="7">
    <location>
        <begin position="517"/>
        <end position="526"/>
    </location>
</feature>
<comment type="function">
    <text evidence="2 5 6 7 8 9 10 11 12 13 14 15 16 17 18">Plays a role in non-canonical Wnt/planar cell polarity (PCP) signaling to regulate convergent extension cell movements during gastrulation. Acts together with scrib and prickle1 and localizes prickle1 and dvl2/dsh to the plasma membrane. Has an overlapping role with kny during both convergent extension and eye development. In the eye, involved in establishing proper alignment of the anterior neural plate and midline cells expressing shha and shhb/twhh. Has indirect effects on a number of other developmental processes including notochord shape formation, neural progenitor cell morphogenesis, segregation of somites and adaxial cell development. Together with prickle1, required for the posterior (caudal) movement of branchiomotor neurons in the hindbrain independently of, and a few hours after, convergent extension (PubMed:10992326, PubMed:10996075, PubMed:11780127, PubMed:11820812, PubMed:12105418, PubMed:12874125, PubMed:15829519, PubMed:16407953, PubMed:17239849, PubMed:9007230, PubMed:9007234, PubMed:9007236, PubMed:9808788, Ref.2). May be required for cell surface localization of fzd3 and fzd6 in the inner ear (By similarity).</text>
</comment>
<comment type="subunit">
    <text evidence="7">Interacts with the PDZ domain of dvl2/dsh.</text>
</comment>
<comment type="subcellular location">
    <subcellularLocation>
        <location evidence="1">Cell membrane</location>
        <topology evidence="1">Multi-pass membrane protein</topology>
    </subcellularLocation>
</comment>
<comment type="tissue specificity">
    <text evidence="7">Ubiquitously expressed at the 4-cell stage. In early somitogenesis, becomes more abundant in anterior neural tissue where expression is seen in the neural tube but not in the notochord.</text>
</comment>
<comment type="developmental stage">
    <text evidence="7">Expressed both maternally and zygotically, with expression peaking at the neurula stage.</text>
</comment>
<comment type="similarity">
    <text evidence="3">Belongs to the Vang family.</text>
</comment>
<comment type="sequence caution" evidence="21">
    <conflict type="miscellaneous discrepancy">
        <sequence resource="EMBL-CDS" id="AAH65983"/>
    </conflict>
    <text>Sequence differs from that shown at the C-terminus, most likely because of a sequence artifact.</text>
</comment>
<name>VANG2_DANRE</name>
<reference evidence="21 23" key="1">
    <citation type="journal article" date="2002" name="Nat. Cell Biol.">
        <title>The planar cell-polarity gene stbm regulates cell behaviour and cell fate in vertebrate embryos.</title>
        <authorList>
            <person name="Park M."/>
            <person name="Moon R.T."/>
        </authorList>
    </citation>
    <scope>NUCLEOTIDE SEQUENCE [MRNA]</scope>
    <scope>FUNCTION</scope>
    <scope>INTERACTION WITH DVL2</scope>
    <scope>TISSUE SPECIFICITY</scope>
    <scope>DEVELOPMENTAL STAGE</scope>
    <scope>MUTAGENESIS OF 517-VAL--VAL-526</scope>
</reference>
<reference key="2">
    <citation type="journal article" date="2002" name="Nat. Cell Biol.">
        <authorList>
            <person name="Park M."/>
            <person name="Moon R.T."/>
        </authorList>
    </citation>
    <scope>ERRATUM OF PUBMED:11780127</scope>
    <scope>FUNCTION</scope>
</reference>
<reference evidence="22" key="3">
    <citation type="submission" date="2004-02" db="EMBL/GenBank/DDBJ databases">
        <authorList>
            <consortium name="NIH - Zebrafish Gene Collection (ZGC) project"/>
        </authorList>
    </citation>
    <scope>NUCLEOTIDE SEQUENCE [LARGE SCALE MRNA]</scope>
    <source>
        <tissue evidence="22">Embryo</tissue>
    </source>
</reference>
<reference evidence="21" key="4">
    <citation type="journal article" date="1996" name="Development">
        <title>Mutations affecting cell fates and cellular rearrangements during gastrulation in zebrafish.</title>
        <authorList>
            <person name="Solnica-Krezel L."/>
            <person name="Stemple D.L."/>
            <person name="Mountcastle-Shah E."/>
            <person name="Rangini Z."/>
            <person name="Neuhauss S.C.F."/>
            <person name="Malicki J."/>
            <person name="Schier A.F."/>
            <person name="Stainier D.Y.R."/>
            <person name="Zwartkruis F."/>
            <person name="Abdelilah S."/>
            <person name="Driever W."/>
        </authorList>
    </citation>
    <scope>FUNCTION</scope>
</reference>
<reference evidence="21" key="5">
    <citation type="journal article" date="1996" name="Development">
        <title>Mutations affecting development of the notochord in zebrafish.</title>
        <authorList>
            <person name="Stemple D.L."/>
            <person name="Solnica-Krezel L."/>
            <person name="Zwartkruis F."/>
            <person name="Neuhauss S.C.F."/>
            <person name="Schier A.F."/>
            <person name="Malicki J."/>
            <person name="Stainier D.Y.R."/>
            <person name="Abdelilah S."/>
            <person name="Rangini Z."/>
            <person name="Mountcastle-Shah E."/>
            <person name="Driever W."/>
        </authorList>
    </citation>
    <scope>FUNCTION</scope>
</reference>
<reference evidence="21" key="6">
    <citation type="journal article" date="1996" name="Development">
        <title>Mutations affecting morphogenesis during gastrulation and tail formation in the zebrafish, Danio rerio.</title>
        <authorList>
            <person name="Hammerschmidt M."/>
            <person name="Pelegri F."/>
            <person name="Mullins M.C."/>
            <person name="Kane D.A."/>
            <person name="Brand M."/>
            <person name="van Eeden F.J.M."/>
            <person name="Furutani-Seiki M."/>
            <person name="Granato M."/>
            <person name="Haffter P."/>
            <person name="Heisenberg C.-P."/>
            <person name="Jiang Y.-J."/>
            <person name="Kelsh R.N."/>
            <person name="Odenthal J."/>
            <person name="Warga R.M."/>
            <person name="Nuesslein-Volhard C."/>
        </authorList>
    </citation>
    <scope>FUNCTION</scope>
</reference>
<reference evidence="21" key="7">
    <citation type="journal article" date="1998" name="Dev. Biol.">
        <title>Functional interactions of genes mediating convergent extension, knypek and trilobite, during the partitioning of the eye primordium in zebrafish.</title>
        <authorList>
            <person name="Marlow F."/>
            <person name="Zwartkruis F."/>
            <person name="Malicki J."/>
            <person name="Neuhauss S.C.F."/>
            <person name="Abbas L."/>
            <person name="Weaver M."/>
            <person name="Driever W."/>
            <person name="Solnica-Krezel L."/>
        </authorList>
    </citation>
    <scope>FUNCTION</scope>
</reference>
<reference evidence="21" key="8">
    <citation type="journal article" date="2000" name="Curr. Biol.">
        <title>Somites in zebrafish doubly mutant for knypek and trilobite form without internal mesenchymal cells or compaction.</title>
        <authorList>
            <person name="Henry C.A."/>
            <person name="Hall L.A."/>
            <person name="Burr Hille M."/>
            <person name="Solnica-Krezel L."/>
            <person name="Cooper M.S."/>
        </authorList>
    </citation>
    <scope>FUNCTION</scope>
</reference>
<reference evidence="21" key="9">
    <citation type="journal article" date="2000" name="Genesis">
        <title>Role of the zebrafish trilobite locus in gastrulation movements of convergence and extension.</title>
        <authorList>
            <person name="Sepich D.S."/>
            <person name="Myers D.C."/>
            <person name="Short R."/>
            <person name="Topczewski J."/>
            <person name="Marlow F."/>
            <person name="Solnica-Krezel L."/>
        </authorList>
    </citation>
    <scope>FUNCTION</scope>
</reference>
<reference evidence="21" key="10">
    <citation type="journal article" date="2002" name="Dev. Biol.">
        <title>The Zebrafish trilobite gene is essential for tangential migration of branchiomotor neurons.</title>
        <authorList>
            <person name="Bingham S."/>
            <person name="Higashijima S."/>
            <person name="Okamoto H."/>
            <person name="Chandrasekhar A."/>
        </authorList>
    </citation>
    <scope>FUNCTION</scope>
</reference>
<reference evidence="21" key="11">
    <citation type="journal article" date="2002" name="Nat. Cell Biol.">
        <title>Zebrafish trilobite identifies new roles for Strabismus in gastrulation and neuronal movements.</title>
        <authorList>
            <person name="Jessen J.R."/>
            <person name="Topczewski J."/>
            <person name="Bingham S."/>
            <person name="Sepich D.S."/>
            <person name="Marlow F."/>
            <person name="Chandrasekhar A."/>
            <person name="Solnica-Krezel L."/>
        </authorList>
    </citation>
    <scope>FUNCTION</scope>
    <scope>IDENTIFICATION OF TRILOBITE AS VANGL2</scope>
</reference>
<reference evidence="21" key="12">
    <citation type="journal article" date="2003" name="Development">
        <title>Prickle 1 regulates cell movements during gastrulation and neuronal migration in zebrafish.</title>
        <authorList>
            <person name="Carreira-Barbosa F."/>
            <person name="Concha M.L."/>
            <person name="Takeuchi M."/>
            <person name="Ueno N."/>
            <person name="Wilson S.W."/>
            <person name="Tada M."/>
        </authorList>
    </citation>
    <scope>FUNCTION</scope>
</reference>
<reference evidence="21" key="13">
    <citation type="journal article" date="2005" name="Development">
        <title>Dual roles of zygotic and maternal Scribble1 in neural migration and convergent extension movements in zebrafish embryos.</title>
        <authorList>
            <person name="Wada H."/>
            <person name="Iwasaki M."/>
            <person name="Sato T."/>
            <person name="Masai I."/>
            <person name="Nishiwaki Y."/>
            <person name="Tanaka H."/>
            <person name="Sato A."/>
            <person name="Nojima Y."/>
            <person name="Okamoto H."/>
        </authorList>
    </citation>
    <scope>FUNCTION</scope>
</reference>
<reference evidence="21" key="14">
    <citation type="journal article" date="2006" name="Nature">
        <title>Planar cell polarity signalling couples cell division and morphogenesis during neurulation.</title>
        <authorList>
            <person name="Ciruna B."/>
            <person name="Jenny A."/>
            <person name="Lee D."/>
            <person name="Mlodzik M."/>
            <person name="Schier A.F."/>
        </authorList>
    </citation>
    <scope>FUNCTION</scope>
</reference>
<reference evidence="21" key="15">
    <citation type="journal article" date="2007" name="Dev. Biol.">
        <title>Convergence and extension movements mediate the specification and fate maintenance of zebrafish slow muscle precursors.</title>
        <authorList>
            <person name="Yin C."/>
            <person name="Solnica-Krezel L."/>
        </authorList>
    </citation>
    <scope>FUNCTION</scope>
</reference>
<gene>
    <name evidence="24" type="primary">vangl2</name>
    <name evidence="19" type="synonym">stbm</name>
    <name evidence="20" type="synonym">tri</name>
</gene>
<sequence>MDNESQYSGYSYKSSHSRSSRKHRDRRDRHRSKSRDSSSRGDKSVTIQAPGEPLLDAESTRGDDRDDNWGETTTVVTGTSEHSVSNEDLTRASKELEDSSPLECRRFAGPIVSGVLGLFALLTPLAFLLLPQLLWRDSLEPCGTPCEGLYVSLAFKLLVLLISSWALFLRPSRSTLPRFFVFRCLLMALVFLFVASYWLFYGVRVLEPRERDYRGIVGYAVSLVDALLFIQYLALVLLEVRHLRPAFCLKVVRTTDGASRFYNVGHLSIQRAAVWVLDHYYTDFPVYNPALLNLPKSILSKKMSGFKVYSLGEENSTNNSTGQSRAMIAAAARRRDNSHNEYYYEEAEMDRRVRKRKARLVVAVEEAFTHIKRLQDDEAAASPKHPREVMDPREAAQAIFAPMARAMQKYLRTTRQQPYHSMESIISHLQFCITHNMTPKAFLERYLTPGPTMQYQRENGRGRQWTLVSEEPVTAALRQGLVFSLRRLDFALVVTVTPLPFLNLGEEFIDPKSHKFVMRLQSETSV</sequence>